<dbReference type="EMBL" id="AE005674">
    <property type="protein sequence ID" value="AAN45561.2"/>
    <property type="status" value="ALT_INIT"/>
    <property type="molecule type" value="Genomic_DNA"/>
</dbReference>
<dbReference type="EMBL" id="AE014073">
    <property type="protein sequence ID" value="AAP18649.1"/>
    <property type="status" value="ALT_INIT"/>
    <property type="molecule type" value="Genomic_DNA"/>
</dbReference>
<dbReference type="RefSeq" id="NP_709854.2">
    <property type="nucleotide sequence ID" value="NC_004337.2"/>
</dbReference>
<dbReference type="RefSeq" id="WP_000719886.1">
    <property type="nucleotide sequence ID" value="NZ_WPGW01000075.1"/>
</dbReference>
<dbReference type="SMR" id="P0AF58"/>
<dbReference type="STRING" id="198214.SF4138"/>
<dbReference type="PaxDb" id="198214-SF4138"/>
<dbReference type="GeneID" id="1027484"/>
<dbReference type="GeneID" id="93777751"/>
<dbReference type="KEGG" id="sfl:SF4138"/>
<dbReference type="KEGG" id="sfx:S3605"/>
<dbReference type="PATRIC" id="fig|198214.7.peg.4882"/>
<dbReference type="HOGENOM" id="CLU_077623_0_0_6"/>
<dbReference type="Proteomes" id="UP000001006">
    <property type="component" value="Chromosome"/>
</dbReference>
<dbReference type="Proteomes" id="UP000002673">
    <property type="component" value="Chromosome"/>
</dbReference>
<dbReference type="FunFam" id="1.25.40.740:FF:000001">
    <property type="entry name" value="Sel1 repeat family protein"/>
    <property type="match status" value="1"/>
</dbReference>
<dbReference type="Gene3D" id="1.25.40.740">
    <property type="match status" value="1"/>
</dbReference>
<dbReference type="Gene3D" id="1.25.40.10">
    <property type="entry name" value="Tetratricopeptide repeat domain"/>
    <property type="match status" value="1"/>
</dbReference>
<dbReference type="InterPro" id="IPR052945">
    <property type="entry name" value="Mitotic_Regulator"/>
</dbReference>
<dbReference type="InterPro" id="IPR006597">
    <property type="entry name" value="Sel1-like"/>
</dbReference>
<dbReference type="InterPro" id="IPR011990">
    <property type="entry name" value="TPR-like_helical_dom_sf"/>
</dbReference>
<dbReference type="PANTHER" id="PTHR43628">
    <property type="entry name" value="ACTIVATOR OF C KINASE PROTEIN 1-RELATED"/>
    <property type="match status" value="1"/>
</dbReference>
<dbReference type="PANTHER" id="PTHR43628:SF1">
    <property type="entry name" value="CHITIN SYNTHASE REGULATORY FACTOR 2-RELATED"/>
    <property type="match status" value="1"/>
</dbReference>
<dbReference type="Pfam" id="PF08238">
    <property type="entry name" value="Sel1"/>
    <property type="match status" value="5"/>
</dbReference>
<dbReference type="SMART" id="SM00671">
    <property type="entry name" value="SEL1"/>
    <property type="match status" value="4"/>
</dbReference>
<dbReference type="SUPFAM" id="SSF81901">
    <property type="entry name" value="HCP-like"/>
    <property type="match status" value="2"/>
</dbReference>
<gene>
    <name type="primary">yjcO</name>
    <name type="ordered locus">SF4138</name>
    <name type="ordered locus">S3605</name>
</gene>
<keyword id="KW-1185">Reference proteome</keyword>
<keyword id="KW-0732">Signal</keyword>
<proteinExistence type="inferred from homology"/>
<feature type="signal peptide" evidence="1">
    <location>
        <begin position="1"/>
        <end position="17"/>
    </location>
</feature>
<feature type="chain" id="PRO_0000044594" description="Uncharacterized protein YjcO">
    <location>
        <begin position="18"/>
        <end position="229"/>
    </location>
</feature>
<sequence length="229" mass="25079">MKKIIALMLFLTFFAHANDSEPGSQYLKAAEAGDRRAQYFLADSWFSSGDLSKAEYWAQKAADSGDADACALLAQIKITNPVSLDYPQAKVLAEKAAQAGSKEGEVTLAHILVNTQAGKPDYPKAISLLENASEDLENDSAVDAQMLLGLIYANGVGIKADDDKATWYFKRSSAISRTGYSEYWAGMMFLNGEEGFIEKNKQKALHWLNLSCMEGFDTGCEEFEKLTNG</sequence>
<comment type="sequence caution" evidence="2">
    <conflict type="erroneous initiation">
        <sequence resource="EMBL-CDS" id="AAN45561"/>
    </conflict>
    <text>Truncated N-terminus.</text>
</comment>
<comment type="sequence caution" evidence="2">
    <conflict type="erroneous initiation">
        <sequence resource="EMBL-CDS" id="AAP18649"/>
    </conflict>
    <text>Truncated N-terminus.</text>
</comment>
<organism>
    <name type="scientific">Shigella flexneri</name>
    <dbReference type="NCBI Taxonomy" id="623"/>
    <lineage>
        <taxon>Bacteria</taxon>
        <taxon>Pseudomonadati</taxon>
        <taxon>Pseudomonadota</taxon>
        <taxon>Gammaproteobacteria</taxon>
        <taxon>Enterobacterales</taxon>
        <taxon>Enterobacteriaceae</taxon>
        <taxon>Shigella</taxon>
    </lineage>
</organism>
<evidence type="ECO:0000255" key="1"/>
<evidence type="ECO:0000305" key="2"/>
<name>YJCO_SHIFL</name>
<protein>
    <recommendedName>
        <fullName>Uncharacterized protein YjcO</fullName>
    </recommendedName>
</protein>
<accession>P0AF58</accession>
<accession>P32713</accession>
<reference key="1">
    <citation type="journal article" date="2002" name="Nucleic Acids Res.">
        <title>Genome sequence of Shigella flexneri 2a: insights into pathogenicity through comparison with genomes of Escherichia coli K12 and O157.</title>
        <authorList>
            <person name="Jin Q."/>
            <person name="Yuan Z."/>
            <person name="Xu J."/>
            <person name="Wang Y."/>
            <person name="Shen Y."/>
            <person name="Lu W."/>
            <person name="Wang J."/>
            <person name="Liu H."/>
            <person name="Yang J."/>
            <person name="Yang F."/>
            <person name="Zhang X."/>
            <person name="Zhang J."/>
            <person name="Yang G."/>
            <person name="Wu H."/>
            <person name="Qu D."/>
            <person name="Dong J."/>
            <person name="Sun L."/>
            <person name="Xue Y."/>
            <person name="Zhao A."/>
            <person name="Gao Y."/>
            <person name="Zhu J."/>
            <person name="Kan B."/>
            <person name="Ding K."/>
            <person name="Chen S."/>
            <person name="Cheng H."/>
            <person name="Yao Z."/>
            <person name="He B."/>
            <person name="Chen R."/>
            <person name="Ma D."/>
            <person name="Qiang B."/>
            <person name="Wen Y."/>
            <person name="Hou Y."/>
            <person name="Yu J."/>
        </authorList>
    </citation>
    <scope>NUCLEOTIDE SEQUENCE [LARGE SCALE GENOMIC DNA]</scope>
    <source>
        <strain>301 / Serotype 2a</strain>
    </source>
</reference>
<reference key="2">
    <citation type="journal article" date="2003" name="Infect. Immun.">
        <title>Complete genome sequence and comparative genomics of Shigella flexneri serotype 2a strain 2457T.</title>
        <authorList>
            <person name="Wei J."/>
            <person name="Goldberg M.B."/>
            <person name="Burland V."/>
            <person name="Venkatesan M.M."/>
            <person name="Deng W."/>
            <person name="Fournier G."/>
            <person name="Mayhew G.F."/>
            <person name="Plunkett G. III"/>
            <person name="Rose D.J."/>
            <person name="Darling A."/>
            <person name="Mau B."/>
            <person name="Perna N.T."/>
            <person name="Payne S.M."/>
            <person name="Runyen-Janecky L.J."/>
            <person name="Zhou S."/>
            <person name="Schwartz D.C."/>
            <person name="Blattner F.R."/>
        </authorList>
    </citation>
    <scope>NUCLEOTIDE SEQUENCE [LARGE SCALE GENOMIC DNA]</scope>
    <source>
        <strain>ATCC 700930 / 2457T / Serotype 2a</strain>
    </source>
</reference>